<reference key="1">
    <citation type="journal article" date="1993" name="Mol. Microbiol.">
        <title>The virA promoter is a host-range determinant in Agrobacterium tumefaciens.</title>
        <authorList>
            <person name="Turk S.C.H.J."/>
            <person name="Nester E.W."/>
            <person name="Hooykaas P.J.J."/>
        </authorList>
    </citation>
    <scope>NUCLEOTIDE SEQUENCE [GENOMIC DNA]</scope>
</reference>
<reference key="2">
    <citation type="journal article" date="1993" name="Plant J.">
        <title>Tissue-specific and wound-inducible pattern of expression of the mannopine synthase promoter is determined by the interaction between positive and negative cis-regulatory elements.</title>
        <authorList>
            <person name="Guevara-Garcia A."/>
            <person name="Mosqueda-Cano G."/>
            <person name="Argueello-Astorga G."/>
            <person name="Simpson J."/>
            <person name="Herrera-Estrella L."/>
        </authorList>
    </citation>
    <scope>NUCLEOTIDE SEQUENCE [GENOMIC DNA]</scope>
</reference>
<reference key="3">
    <citation type="journal article" date="1983" name="Plant Mol. Biol.">
        <title>Nucleotide sequence of the T-DNA region from the Agrobacterium tumefaciens octopine Ti plasmid pTi15955.</title>
        <authorList>
            <person name="Barker R.F."/>
            <person name="Idler K.B."/>
            <person name="Thompson D.V."/>
            <person name="Kemp J.D."/>
        </authorList>
        <dbReference type="AGRICOLA" id="IND84096335"/>
    </citation>
    <scope>NUCLEOTIDE SEQUENCE [GENOMIC DNA]</scope>
</reference>
<reference key="4">
    <citation type="journal article" date="1984" name="EMBO J.">
        <title>The complete nucleotide sequence of the TL-DNA of the Agrobacterium tumefaciens plasmid pTiAch5.</title>
        <authorList>
            <person name="Gielen J."/>
            <person name="de Beuckeleer M."/>
            <person name="Seurinck J."/>
            <person name="Deboeck F."/>
            <person name="de Greve H."/>
            <person name="Lemmers M."/>
            <person name="van Montagu M."/>
            <person name="Schell J."/>
        </authorList>
    </citation>
    <scope>PRELIMINARY NUCLEOTIDE SEQUENCE [GENOMIC DNA]</scope>
</reference>
<reference key="5">
    <citation type="submission" date="2000-03" db="EMBL/GenBank/DDBJ databases">
        <title>Octopine-type Ti plasmid sequence.</title>
        <authorList>
            <person name="Winans S.C."/>
            <person name="Zhu J."/>
            <person name="Oger P.M."/>
            <person name="Schrammeijer B."/>
            <person name="Hooykaas P.J."/>
            <person name="Farrand S.K."/>
        </authorList>
    </citation>
    <scope>NUCLEOTIDE SEQUENCE [GENOMIC DNA]</scope>
</reference>
<dbReference type="EMBL" id="X00493">
    <property type="protein sequence ID" value="CAA25163.1"/>
    <property type="molecule type" value="Genomic_DNA"/>
</dbReference>
<dbReference type="EMBL" id="AF242881">
    <property type="protein sequence ID" value="AAF77120.1"/>
    <property type="molecule type" value="Genomic_DNA"/>
</dbReference>
<dbReference type="PIR" id="A04496">
    <property type="entry name" value="QQAG1T"/>
</dbReference>
<dbReference type="PIR" id="S28683">
    <property type="entry name" value="S28683"/>
</dbReference>
<dbReference type="RefSeq" id="NP_059673.1">
    <property type="nucleotide sequence ID" value="NC_002377.1"/>
</dbReference>
<dbReference type="InterPro" id="IPR006064">
    <property type="entry name" value="Glycosidase"/>
</dbReference>
<dbReference type="Pfam" id="PF02027">
    <property type="entry name" value="RolB_RolC"/>
    <property type="match status" value="1"/>
</dbReference>
<protein>
    <recommendedName>
        <fullName>Uncharacterized protein 1</fullName>
    </recommendedName>
    <alternativeName>
        <fullName>Gene 5 protein</fullName>
    </alternativeName>
</protein>
<geneLocation type="plasmid">
    <name>pTiAch5</name>
</geneLocation>
<name>YP1_AGRT4</name>
<keyword id="KW-0192">Crown gall tumor</keyword>
<keyword id="KW-0614">Plasmid</keyword>
<sequence>MYDGQPIFNIIDSSNLQDRRELKLVLIHTENAYRSSAQRSLIASQRSWINFIINTDVPIDPAKDEVVKCSRKVACCPDPTDIPFDILNVSLLYVYCSFQEMRRYAQQRFYDGVSDGGAVISTVPPYAEGITKQTMRLWQKKVWQNTSKETHDLDAYIALLPNLRFKIQISHI</sequence>
<feature type="chain" id="PRO_0000197037" description="Uncharacterized protein 1">
    <location>
        <begin position="1"/>
        <end position="172"/>
    </location>
</feature>
<organism>
    <name type="scientific">Agrobacterium tumefaciens (strain Ach5)</name>
    <dbReference type="NCBI Taxonomy" id="176298"/>
    <lineage>
        <taxon>Bacteria</taxon>
        <taxon>Pseudomonadati</taxon>
        <taxon>Pseudomonadota</taxon>
        <taxon>Alphaproteobacteria</taxon>
        <taxon>Hyphomicrobiales</taxon>
        <taxon>Rhizobiaceae</taxon>
        <taxon>Rhizobium/Agrobacterium group</taxon>
        <taxon>Agrobacterium</taxon>
        <taxon>Agrobacterium tumefaciens complex</taxon>
    </lineage>
</organism>
<accession>P04028</accession>
<proteinExistence type="predicted"/>